<proteinExistence type="evidence at protein level"/>
<name>PSTS3_MYCTU</name>
<comment type="function">
    <text evidence="3 4 5 6">Functions in inorganic phosphate uptake, is probably the main carrier for phosphate uptake, it is the most highly expressed of the 3 PstS proteins under phosphate starvation (PubMed:20933472). Binds phosphate; probably able to bind both H(2)PO(4)(-) and HPO(4)(2-) (PubMed:24615888). Part of the ABC transporter complex PstSACB involved in phosphate import (Probable). Probably plays a role in host phagosome maturation arrest (PubMed:20844580).</text>
</comment>
<comment type="subunit">
    <text evidence="4 5">Monomer (PubMed:24615888). The complex is composed of two ATP-binding proteins (PstB), two transmembrane proteins (PstC and PstA) and a solute-binding protein (PstS).</text>
</comment>
<comment type="subcellular location">
    <subcellularLocation>
        <location evidence="5">Cell membrane</location>
        <topology evidence="5">Lipid-anchor</topology>
    </subcellularLocation>
</comment>
<comment type="induction">
    <text evidence="2 3">Transcription induced 6-fold by phosphate starvation, protein levels increase after 24 hours starvation (at protein level) (PubMed:20933472). Part of the pstS3-pstC2-pstA1 operon.</text>
</comment>
<comment type="disruption phenotype">
    <text evidence="3">Grows normally in liquid culture, traffics into host (human and mouse) acidified compartments early after phagocytosis, suggesting it no longer arrests phagosome maturation as well as wild-type, impaired growth in mouse macrophages (PubMed:20844580). No growth phenotype in phosphate-rich medium (3.6 mM Pi), nor in restricted medium (Sauton), but in phosphate-free Sauton medium dies faster than wild-type when pre-exposed to complete starvation (PubMed:20933472).</text>
</comment>
<comment type="similarity">
    <text evidence="5">Belongs to the PstS family.</text>
</comment>
<dbReference type="EMBL" id="Z48057">
    <property type="protein sequence ID" value="CAA88138.1"/>
    <property type="molecule type" value="Genomic_DNA"/>
</dbReference>
<dbReference type="EMBL" id="AL123456">
    <property type="protein sequence ID" value="CCP43676.1"/>
    <property type="molecule type" value="Genomic_DNA"/>
</dbReference>
<dbReference type="PIR" id="H70583">
    <property type="entry name" value="H70583"/>
</dbReference>
<dbReference type="RefSeq" id="YP_177768.1">
    <property type="nucleotide sequence ID" value="NC_000962.3"/>
</dbReference>
<dbReference type="PDB" id="4LVQ">
    <property type="method" value="X-ray"/>
    <property type="resolution" value="2.30 A"/>
    <property type="chains" value="A/B=1-370"/>
</dbReference>
<dbReference type="PDBsum" id="4LVQ"/>
<dbReference type="SMR" id="P9WGT7"/>
<dbReference type="FunCoup" id="P9WGT7">
    <property type="interactions" value="138"/>
</dbReference>
<dbReference type="STRING" id="83332.Rv0928"/>
<dbReference type="PaxDb" id="83332-Rv0928"/>
<dbReference type="DNASU" id="885366"/>
<dbReference type="GeneID" id="885366"/>
<dbReference type="KEGG" id="mtu:Rv0928"/>
<dbReference type="KEGG" id="mtv:RVBD_0928"/>
<dbReference type="TubercuList" id="Rv0928"/>
<dbReference type="eggNOG" id="COG0226">
    <property type="taxonomic scope" value="Bacteria"/>
</dbReference>
<dbReference type="InParanoid" id="P9WGT7"/>
<dbReference type="OrthoDB" id="9801510at2"/>
<dbReference type="PhylomeDB" id="P9WGT7"/>
<dbReference type="EvolutionaryTrace" id="P9WGT7"/>
<dbReference type="Proteomes" id="UP000001584">
    <property type="component" value="Chromosome"/>
</dbReference>
<dbReference type="GO" id="GO:0043190">
    <property type="term" value="C:ATP-binding cassette (ABC) transporter complex"/>
    <property type="evidence" value="ECO:0007669"/>
    <property type="project" value="InterPro"/>
</dbReference>
<dbReference type="GO" id="GO:0005576">
    <property type="term" value="C:extracellular region"/>
    <property type="evidence" value="ECO:0007005"/>
    <property type="project" value="MTBBASE"/>
</dbReference>
<dbReference type="GO" id="GO:0009274">
    <property type="term" value="C:peptidoglycan-based cell wall"/>
    <property type="evidence" value="ECO:0007005"/>
    <property type="project" value="MTBBASE"/>
</dbReference>
<dbReference type="GO" id="GO:0005886">
    <property type="term" value="C:plasma membrane"/>
    <property type="evidence" value="ECO:0000314"/>
    <property type="project" value="MTBBASE"/>
</dbReference>
<dbReference type="GO" id="GO:0042301">
    <property type="term" value="F:phosphate ion binding"/>
    <property type="evidence" value="ECO:0007669"/>
    <property type="project" value="InterPro"/>
</dbReference>
<dbReference type="GO" id="GO:0051701">
    <property type="term" value="P:biological process involved in interaction with host"/>
    <property type="evidence" value="ECO:0000315"/>
    <property type="project" value="MTBBASE"/>
</dbReference>
<dbReference type="GO" id="GO:0051301">
    <property type="term" value="P:cell division"/>
    <property type="evidence" value="ECO:0000314"/>
    <property type="project" value="MTBBASE"/>
</dbReference>
<dbReference type="GO" id="GO:0016036">
    <property type="term" value="P:cellular response to phosphate starvation"/>
    <property type="evidence" value="ECO:0000314"/>
    <property type="project" value="MTBBASE"/>
</dbReference>
<dbReference type="GO" id="GO:0035435">
    <property type="term" value="P:phosphate ion transmembrane transport"/>
    <property type="evidence" value="ECO:0007669"/>
    <property type="project" value="InterPro"/>
</dbReference>
<dbReference type="GO" id="GO:0052170">
    <property type="term" value="P:symbiont-mediated suppression of host innate immune response"/>
    <property type="evidence" value="ECO:0000314"/>
    <property type="project" value="MTBBASE"/>
</dbReference>
<dbReference type="CDD" id="cd13565">
    <property type="entry name" value="PBP2_PstS"/>
    <property type="match status" value="1"/>
</dbReference>
<dbReference type="Gene3D" id="3.40.190.10">
    <property type="entry name" value="Periplasmic binding protein-like II"/>
    <property type="match status" value="2"/>
</dbReference>
<dbReference type="InterPro" id="IPR005673">
    <property type="entry name" value="ABC_phos-bd_PstS"/>
</dbReference>
<dbReference type="InterPro" id="IPR024370">
    <property type="entry name" value="PBP_domain"/>
</dbReference>
<dbReference type="InterPro" id="IPR050962">
    <property type="entry name" value="Phosphate-bind_PstS"/>
</dbReference>
<dbReference type="NCBIfam" id="TIGR00975">
    <property type="entry name" value="3a0107s03"/>
    <property type="match status" value="1"/>
</dbReference>
<dbReference type="PANTHER" id="PTHR42996">
    <property type="entry name" value="PHOSPHATE-BINDING PROTEIN PSTS"/>
    <property type="match status" value="1"/>
</dbReference>
<dbReference type="PANTHER" id="PTHR42996:SF1">
    <property type="entry name" value="PHOSPHATE-BINDING PROTEIN PSTS"/>
    <property type="match status" value="1"/>
</dbReference>
<dbReference type="Pfam" id="PF12849">
    <property type="entry name" value="PBP_like_2"/>
    <property type="match status" value="1"/>
</dbReference>
<dbReference type="PIRSF" id="PIRSF002756">
    <property type="entry name" value="PstS"/>
    <property type="match status" value="1"/>
</dbReference>
<dbReference type="SUPFAM" id="SSF53850">
    <property type="entry name" value="Periplasmic binding protein-like II"/>
    <property type="match status" value="1"/>
</dbReference>
<dbReference type="PROSITE" id="PS51257">
    <property type="entry name" value="PROKAR_LIPOPROTEIN"/>
    <property type="match status" value="1"/>
</dbReference>
<sequence length="370" mass="37953">MKLNRFGAAVGVLAAGALVLSACGNDDNVTGGGATTGQASAKVDCGGKKTLKASGSTAQANAMTRFVNVFEQACPGQTLNYTANGSGAGISEFNGNQTDFGGSDVPLSKDEAAAAQRRCGSPAWNLPVVFGPIAVTYNLNSVSSLNLDGPTLAKIFNGSITQWNNPAIQALNRDFTLPGERIHVVFRSDESGTTDNFQRYLQAASNGAWGKGAGKSFQGGVGEGARGNDGTSAAAKNTPGSITYNEWSFAQAQHLTMANIVTSAGGDPVAITIDSVGQTIAGATISGVGNDLVLDTDSFYRPKRPGSYPIVLATYEIVCSKYPDSQVGTAVKAFLQSTIGAGQSGLGDNGYIPIPDEFKSRLSTAVNAIA</sequence>
<reference key="1">
    <citation type="journal article" date="1996" name="FEBS Lett.">
        <title>Identification of a second Mycobacterium tuberculosis gene cluster encoding proteins of an ABC phosphate transporter.</title>
        <authorList>
            <person name="Braibant M."/>
            <person name="Lefevre P."/>
            <person name="de Wit L."/>
            <person name="Ooms J."/>
            <person name="Peirs P."/>
            <person name="Huygen K."/>
            <person name="Wattiez R."/>
            <person name="Content J."/>
        </authorList>
    </citation>
    <scope>NUCLEOTIDE SEQUENCE [GENOMIC DNA]</scope>
    <source>
        <strain>ATCC 35801 / TMC 107 / Erdman</strain>
    </source>
</reference>
<reference key="2">
    <citation type="journal article" date="1998" name="Nature">
        <title>Deciphering the biology of Mycobacterium tuberculosis from the complete genome sequence.</title>
        <authorList>
            <person name="Cole S.T."/>
            <person name="Brosch R."/>
            <person name="Parkhill J."/>
            <person name="Garnier T."/>
            <person name="Churcher C.M."/>
            <person name="Harris D.E."/>
            <person name="Gordon S.V."/>
            <person name="Eiglmeier K."/>
            <person name="Gas S."/>
            <person name="Barry C.E. III"/>
            <person name="Tekaia F."/>
            <person name="Badcock K."/>
            <person name="Basham D."/>
            <person name="Brown D."/>
            <person name="Chillingworth T."/>
            <person name="Connor R."/>
            <person name="Davies R.M."/>
            <person name="Devlin K."/>
            <person name="Feltwell T."/>
            <person name="Gentles S."/>
            <person name="Hamlin N."/>
            <person name="Holroyd S."/>
            <person name="Hornsby T."/>
            <person name="Jagels K."/>
            <person name="Krogh A."/>
            <person name="McLean J."/>
            <person name="Moule S."/>
            <person name="Murphy L.D."/>
            <person name="Oliver S."/>
            <person name="Osborne J."/>
            <person name="Quail M.A."/>
            <person name="Rajandream M.A."/>
            <person name="Rogers J."/>
            <person name="Rutter S."/>
            <person name="Seeger K."/>
            <person name="Skelton S."/>
            <person name="Squares S."/>
            <person name="Squares R."/>
            <person name="Sulston J.E."/>
            <person name="Taylor K."/>
            <person name="Whitehead S."/>
            <person name="Barrell B.G."/>
        </authorList>
    </citation>
    <scope>NUCLEOTIDE SEQUENCE [LARGE SCALE GENOMIC DNA]</scope>
    <source>
        <strain>ATCC 25618 / H37Rv</strain>
    </source>
</reference>
<reference key="3">
    <citation type="journal article" date="1997" name="J. Bacteriol.">
        <title>Three different putative phosphate transport receptors are encoded by the Mycobacterium tuberculosis genome and are present at the surface of Mycobacterium bovis BCG.</title>
        <authorList>
            <person name="Lefevre P."/>
            <person name="Braibant M."/>
            <person name="de Wit L."/>
            <person name="Kalai M."/>
            <person name="Roeper D."/>
            <person name="Groetzinger J."/>
            <person name="Delville J.-P."/>
            <person name="Peirs P."/>
            <person name="Ooms J."/>
            <person name="Huygen K."/>
            <person name="Content J."/>
        </authorList>
    </citation>
    <scope>CHARACTERIZATION</scope>
    <source>
        <strain>ATCC 35801 / TMC 107 / Erdman</strain>
    </source>
</reference>
<reference key="4">
    <citation type="journal article" date="2010" name="PLoS Pathog.">
        <title>High content phenotypic cell-based visual screen identifies Mycobacterium tuberculosis acyltrehalose-containing glycolipids involved in phagosome remodeling.</title>
        <authorList>
            <person name="Brodin P."/>
            <person name="Poquet Y."/>
            <person name="Levillain F."/>
            <person name="Peguillet I."/>
            <person name="Larrouy-Maumus G."/>
            <person name="Gilleron M."/>
            <person name="Ewann F."/>
            <person name="Christophe T."/>
            <person name="Fenistein D."/>
            <person name="Jang J."/>
            <person name="Jang M.S."/>
            <person name="Park S.J."/>
            <person name="Rauzier J."/>
            <person name="Carralot J.P."/>
            <person name="Shrimpton R."/>
            <person name="Genovesio A."/>
            <person name="Gonzalo-Asensio J.A."/>
            <person name="Puzo G."/>
            <person name="Martin C."/>
            <person name="Brosch R."/>
            <person name="Stewart G.R."/>
            <person name="Gicquel B."/>
            <person name="Neyrolles O."/>
        </authorList>
    </citation>
    <scope>FUNCTION</scope>
    <scope>DISRUPTION PHENOTYPE</scope>
    <source>
        <strain>Beijing GC1237</strain>
    </source>
</reference>
<reference key="5">
    <citation type="journal article" date="2010" name="Tuberculosis">
        <title>Effect of PstS sub-units or PknD deficiency on the survival of Mycobacterium tuberculosis.</title>
        <authorList>
            <person name="Vanzembergh F."/>
            <person name="Peirs P."/>
            <person name="Lefevre P."/>
            <person name="Celio N."/>
            <person name="Mathys V."/>
            <person name="Content J."/>
            <person name="Kalai M."/>
        </authorList>
    </citation>
    <scope>FUNCTION</scope>
    <scope>INDUCTION BY PHOSPHATE STARVATION</scope>
    <scope>DISRUPTION PHENOTYPE</scope>
    <source>
        <strain>H37Rv</strain>
    </source>
</reference>
<reference key="6">
    <citation type="journal article" date="2011" name="Mol. Cell. Proteomics">
        <title>Proteogenomic analysis of Mycobacterium tuberculosis by high resolution mass spectrometry.</title>
        <authorList>
            <person name="Kelkar D.S."/>
            <person name="Kumar D."/>
            <person name="Kumar P."/>
            <person name="Balakrishnan L."/>
            <person name="Muthusamy B."/>
            <person name="Yadav A.K."/>
            <person name="Shrivastava P."/>
            <person name="Marimuthu A."/>
            <person name="Anand S."/>
            <person name="Sundaram H."/>
            <person name="Kingsbury R."/>
            <person name="Harsha H.C."/>
            <person name="Nair B."/>
            <person name="Prasad T.S."/>
            <person name="Chauhan D.S."/>
            <person name="Katoch K."/>
            <person name="Katoch V.M."/>
            <person name="Kumar P."/>
            <person name="Chaerkady R."/>
            <person name="Ramachandran S."/>
            <person name="Dash D."/>
            <person name="Pandey A."/>
        </authorList>
    </citation>
    <scope>IDENTIFICATION BY MASS SPECTROMETRY [LARGE SCALE ANALYSIS]</scope>
    <source>
        <strain>ATCC 25618 / H37Rv</strain>
    </source>
</reference>
<reference key="7">
    <citation type="journal article" date="2014" name="Proteins">
        <title>Crystal structure of the Mycobacterium tuberculosis phosphate binding protein PstS3.</title>
        <authorList>
            <person name="Ferraris D.M."/>
            <person name="Spallek R."/>
            <person name="Oehlmann W."/>
            <person name="Singh M."/>
            <person name="Rizzi M."/>
        </authorList>
    </citation>
    <scope>X-RAY CRYSTALLOGRAPHY (2.30 ANGSTROMS) IN COMPLEX WITH PHOSPHATE</scope>
    <scope>SUBUNIT</scope>
</reference>
<protein>
    <recommendedName>
        <fullName>Phosphate-binding protein PstS 3</fullName>
        <shortName>PBP 3</shortName>
        <shortName>PstS-3</shortName>
    </recommendedName>
    <alternativeName>
        <fullName>Antigen Ag88</fullName>
    </alternativeName>
</protein>
<evidence type="ECO:0000255" key="1">
    <source>
        <dbReference type="PROSITE-ProRule" id="PRU00303"/>
    </source>
</evidence>
<evidence type="ECO:0000269" key="2">
    <source>
    </source>
</evidence>
<evidence type="ECO:0000269" key="3">
    <source>
    </source>
</evidence>
<evidence type="ECO:0000269" key="4">
    <source>
    </source>
</evidence>
<evidence type="ECO:0000305" key="5"/>
<evidence type="ECO:0000305" key="6">
    <source>
    </source>
</evidence>
<evidence type="ECO:0000305" key="7">
    <source>
    </source>
</evidence>
<evidence type="ECO:0007829" key="8">
    <source>
        <dbReference type="PDB" id="4LVQ"/>
    </source>
</evidence>
<feature type="signal peptide" evidence="1">
    <location>
        <begin position="1"/>
        <end position="22"/>
    </location>
</feature>
<feature type="chain" id="PRO_0000031859" description="Phosphate-binding protein PstS 3">
    <location>
        <begin position="23"/>
        <end position="370"/>
    </location>
</feature>
<feature type="binding site" evidence="4">
    <location>
        <begin position="56"/>
        <end position="58"/>
    </location>
    <ligand>
        <name>phosphate</name>
        <dbReference type="ChEBI" id="CHEBI:43474"/>
    </ligand>
</feature>
<feature type="binding site" evidence="4">
    <location>
        <position position="86"/>
    </location>
    <ligand>
        <name>phosphate</name>
        <dbReference type="ChEBI" id="CHEBI:43474"/>
    </ligand>
</feature>
<feature type="binding site" evidence="7">
    <location>
        <position position="104"/>
    </location>
    <ligand>
        <name>phosphate</name>
        <dbReference type="ChEBI" id="CHEBI:43474"/>
    </ligand>
</feature>
<feature type="binding site" evidence="4">
    <location>
        <begin position="191"/>
        <end position="193"/>
    </location>
    <ligand>
        <name>phosphate</name>
        <dbReference type="ChEBI" id="CHEBI:43474"/>
    </ligand>
</feature>
<feature type="lipid moiety-binding region" description="N-palmitoyl cysteine" evidence="1">
    <location>
        <position position="23"/>
    </location>
</feature>
<feature type="lipid moiety-binding region" description="S-diacylglycerol cysteine" evidence="1">
    <location>
        <position position="23"/>
    </location>
</feature>
<feature type="sequence variant" description="In strain: Erdman.">
    <original>AAA</original>
    <variation>PSG</variation>
    <location>
        <begin position="112"/>
        <end position="114"/>
    </location>
</feature>
<feature type="sequence variant" description="In strain: Erdman.">
    <original>Q</original>
    <variation>A</variation>
    <location>
        <position position="116"/>
    </location>
</feature>
<feature type="sequence variant" description="In strain: Erdman.">
    <location>
        <position position="118"/>
    </location>
</feature>
<feature type="sequence variant" description="In strain: Erdman.">
    <original>QH</original>
    <variation>HD</variation>
    <location>
        <begin position="253"/>
        <end position="254"/>
    </location>
</feature>
<feature type="strand" evidence="8">
    <location>
        <begin position="51"/>
        <end position="55"/>
    </location>
</feature>
<feature type="helix" evidence="8">
    <location>
        <begin position="60"/>
        <end position="73"/>
    </location>
</feature>
<feature type="strand" evidence="8">
    <location>
        <begin position="79"/>
        <end position="83"/>
    </location>
</feature>
<feature type="helix" evidence="8">
    <location>
        <begin position="86"/>
        <end position="94"/>
    </location>
</feature>
<feature type="strand" evidence="8">
    <location>
        <begin position="99"/>
        <end position="105"/>
    </location>
</feature>
<feature type="helix" evidence="8">
    <location>
        <begin position="109"/>
        <end position="119"/>
    </location>
</feature>
<feature type="strand" evidence="8">
    <location>
        <begin position="123"/>
        <end position="137"/>
    </location>
</feature>
<feature type="strand" evidence="8">
    <location>
        <begin position="146"/>
        <end position="148"/>
    </location>
</feature>
<feature type="helix" evidence="8">
    <location>
        <begin position="149"/>
        <end position="156"/>
    </location>
</feature>
<feature type="helix" evidence="8">
    <location>
        <begin position="166"/>
        <end position="170"/>
    </location>
</feature>
<feature type="strand" evidence="8">
    <location>
        <begin position="183"/>
        <end position="189"/>
    </location>
</feature>
<feature type="helix" evidence="8">
    <location>
        <begin position="192"/>
        <end position="204"/>
    </location>
</feature>
<feature type="strand" evidence="8">
    <location>
        <begin position="214"/>
        <end position="216"/>
    </location>
</feature>
<feature type="strand" evidence="8">
    <location>
        <begin position="222"/>
        <end position="226"/>
    </location>
</feature>
<feature type="helix" evidence="8">
    <location>
        <begin position="227"/>
        <end position="237"/>
    </location>
</feature>
<feature type="strand" evidence="8">
    <location>
        <begin position="241"/>
        <end position="246"/>
    </location>
</feature>
<feature type="helix" evidence="8">
    <location>
        <begin position="247"/>
        <end position="252"/>
    </location>
</feature>
<feature type="strand" evidence="8">
    <location>
        <begin position="259"/>
        <end position="261"/>
    </location>
</feature>
<feature type="helix" evidence="8">
    <location>
        <begin position="272"/>
        <end position="279"/>
    </location>
</feature>
<feature type="strand" evidence="8">
    <location>
        <begin position="283"/>
        <end position="286"/>
    </location>
</feature>
<feature type="strand" evidence="8">
    <location>
        <begin position="288"/>
        <end position="290"/>
    </location>
</feature>
<feature type="helix" evidence="8">
    <location>
        <begin position="297"/>
        <end position="299"/>
    </location>
</feature>
<feature type="strand" evidence="8">
    <location>
        <begin position="303"/>
        <end position="306"/>
    </location>
</feature>
<feature type="strand" evidence="8">
    <location>
        <begin position="311"/>
        <end position="321"/>
    </location>
</feature>
<feature type="helix" evidence="8">
    <location>
        <begin position="325"/>
        <end position="339"/>
    </location>
</feature>
<feature type="helix" evidence="8">
    <location>
        <begin position="341"/>
        <end position="343"/>
    </location>
</feature>
<feature type="strand" evidence="8">
    <location>
        <begin position="346"/>
        <end position="350"/>
    </location>
</feature>
<feature type="helix" evidence="8">
    <location>
        <begin position="354"/>
        <end position="364"/>
    </location>
</feature>
<keyword id="KW-0002">3D-structure</keyword>
<keyword id="KW-1003">Cell membrane</keyword>
<keyword id="KW-0449">Lipoprotein</keyword>
<keyword id="KW-0472">Membrane</keyword>
<keyword id="KW-0564">Palmitate</keyword>
<keyword id="KW-0592">Phosphate transport</keyword>
<keyword id="KW-1185">Reference proteome</keyword>
<keyword id="KW-0732">Signal</keyword>
<keyword id="KW-0346">Stress response</keyword>
<keyword id="KW-0813">Transport</keyword>
<accession>P9WGT7</accession>
<accession>L0T5B5</accession>
<accession>O86343</accession>
<accession>P0A5Y2</accession>
<accession>Q50794</accession>
<gene>
    <name type="primary">pstS3</name>
    <name type="synonym">phoS2</name>
    <name type="ordered locus">Rv0928</name>
    <name type="ORF">MTCY21C12.22</name>
</gene>
<organism>
    <name type="scientific">Mycobacterium tuberculosis (strain ATCC 25618 / H37Rv)</name>
    <dbReference type="NCBI Taxonomy" id="83332"/>
    <lineage>
        <taxon>Bacteria</taxon>
        <taxon>Bacillati</taxon>
        <taxon>Actinomycetota</taxon>
        <taxon>Actinomycetes</taxon>
        <taxon>Mycobacteriales</taxon>
        <taxon>Mycobacteriaceae</taxon>
        <taxon>Mycobacterium</taxon>
        <taxon>Mycobacterium tuberculosis complex</taxon>
    </lineage>
</organism>